<proteinExistence type="inferred from homology"/>
<keyword id="KW-0687">Ribonucleoprotein</keyword>
<keyword id="KW-0689">Ribosomal protein</keyword>
<keyword id="KW-0694">RNA-binding</keyword>
<keyword id="KW-0699">rRNA-binding</keyword>
<accession>B5EN54</accession>
<dbReference type="EMBL" id="CP001132">
    <property type="protein sequence ID" value="ACH84443.1"/>
    <property type="molecule type" value="Genomic_DNA"/>
</dbReference>
<dbReference type="RefSeq" id="WP_012537291.1">
    <property type="nucleotide sequence ID" value="NC_011206.1"/>
</dbReference>
<dbReference type="SMR" id="B5EN54"/>
<dbReference type="GeneID" id="89662264"/>
<dbReference type="KEGG" id="afe:Lferr_2240"/>
<dbReference type="eggNOG" id="COG0292">
    <property type="taxonomic scope" value="Bacteria"/>
</dbReference>
<dbReference type="HOGENOM" id="CLU_123265_0_1_6"/>
<dbReference type="GO" id="GO:1990904">
    <property type="term" value="C:ribonucleoprotein complex"/>
    <property type="evidence" value="ECO:0007669"/>
    <property type="project" value="UniProtKB-KW"/>
</dbReference>
<dbReference type="GO" id="GO:0005840">
    <property type="term" value="C:ribosome"/>
    <property type="evidence" value="ECO:0007669"/>
    <property type="project" value="UniProtKB-KW"/>
</dbReference>
<dbReference type="GO" id="GO:0019843">
    <property type="term" value="F:rRNA binding"/>
    <property type="evidence" value="ECO:0007669"/>
    <property type="project" value="UniProtKB-UniRule"/>
</dbReference>
<dbReference type="GO" id="GO:0003735">
    <property type="term" value="F:structural constituent of ribosome"/>
    <property type="evidence" value="ECO:0007669"/>
    <property type="project" value="InterPro"/>
</dbReference>
<dbReference type="GO" id="GO:0000027">
    <property type="term" value="P:ribosomal large subunit assembly"/>
    <property type="evidence" value="ECO:0007669"/>
    <property type="project" value="UniProtKB-UniRule"/>
</dbReference>
<dbReference type="GO" id="GO:0006412">
    <property type="term" value="P:translation"/>
    <property type="evidence" value="ECO:0007669"/>
    <property type="project" value="InterPro"/>
</dbReference>
<dbReference type="CDD" id="cd07026">
    <property type="entry name" value="Ribosomal_L20"/>
    <property type="match status" value="1"/>
</dbReference>
<dbReference type="FunFam" id="1.10.1900.20:FF:000001">
    <property type="entry name" value="50S ribosomal protein L20"/>
    <property type="match status" value="1"/>
</dbReference>
<dbReference type="Gene3D" id="6.10.160.10">
    <property type="match status" value="1"/>
</dbReference>
<dbReference type="Gene3D" id="1.10.1900.20">
    <property type="entry name" value="Ribosomal protein L20"/>
    <property type="match status" value="1"/>
</dbReference>
<dbReference type="HAMAP" id="MF_00382">
    <property type="entry name" value="Ribosomal_bL20"/>
    <property type="match status" value="1"/>
</dbReference>
<dbReference type="InterPro" id="IPR005813">
    <property type="entry name" value="Ribosomal_bL20"/>
</dbReference>
<dbReference type="InterPro" id="IPR049946">
    <property type="entry name" value="RIBOSOMAL_L20_CS"/>
</dbReference>
<dbReference type="InterPro" id="IPR035566">
    <property type="entry name" value="Ribosomal_protein_bL20_C"/>
</dbReference>
<dbReference type="NCBIfam" id="TIGR01032">
    <property type="entry name" value="rplT_bact"/>
    <property type="match status" value="1"/>
</dbReference>
<dbReference type="PANTHER" id="PTHR10986">
    <property type="entry name" value="39S RIBOSOMAL PROTEIN L20"/>
    <property type="match status" value="1"/>
</dbReference>
<dbReference type="Pfam" id="PF00453">
    <property type="entry name" value="Ribosomal_L20"/>
    <property type="match status" value="1"/>
</dbReference>
<dbReference type="PRINTS" id="PR00062">
    <property type="entry name" value="RIBOSOMALL20"/>
</dbReference>
<dbReference type="SUPFAM" id="SSF74731">
    <property type="entry name" value="Ribosomal protein L20"/>
    <property type="match status" value="1"/>
</dbReference>
<dbReference type="PROSITE" id="PS00937">
    <property type="entry name" value="RIBOSOMAL_L20"/>
    <property type="match status" value="1"/>
</dbReference>
<comment type="function">
    <text evidence="1">Binds directly to 23S ribosomal RNA and is necessary for the in vitro assembly process of the 50S ribosomal subunit. It is not involved in the protein synthesizing functions of that subunit.</text>
</comment>
<comment type="similarity">
    <text evidence="1">Belongs to the bacterial ribosomal protein bL20 family.</text>
</comment>
<name>RL20_ACIF5</name>
<reference key="1">
    <citation type="submission" date="2008-08" db="EMBL/GenBank/DDBJ databases">
        <title>Complete sequence of Acidithiobacillus ferrooxidans ATCC 53993.</title>
        <authorList>
            <person name="Lucas S."/>
            <person name="Copeland A."/>
            <person name="Lapidus A."/>
            <person name="Glavina del Rio T."/>
            <person name="Dalin E."/>
            <person name="Tice H."/>
            <person name="Bruce D."/>
            <person name="Goodwin L."/>
            <person name="Pitluck S."/>
            <person name="Sims D."/>
            <person name="Brettin T."/>
            <person name="Detter J.C."/>
            <person name="Han C."/>
            <person name="Kuske C.R."/>
            <person name="Larimer F."/>
            <person name="Land M."/>
            <person name="Hauser L."/>
            <person name="Kyrpides N."/>
            <person name="Lykidis A."/>
            <person name="Borole A.P."/>
        </authorList>
    </citation>
    <scope>NUCLEOTIDE SEQUENCE [LARGE SCALE GENOMIC DNA]</scope>
    <source>
        <strain>ATCC 53993 / BNL-5-31</strain>
    </source>
</reference>
<feature type="chain" id="PRO_1000122261" description="Large ribosomal subunit protein bL20">
    <location>
        <begin position="1"/>
        <end position="119"/>
    </location>
</feature>
<evidence type="ECO:0000255" key="1">
    <source>
        <dbReference type="HAMAP-Rule" id="MF_00382"/>
    </source>
</evidence>
<evidence type="ECO:0000305" key="2"/>
<organism>
    <name type="scientific">Acidithiobacillus ferrooxidans (strain ATCC 53993 / BNL-5-31)</name>
    <name type="common">Leptospirillum ferrooxidans (ATCC 53993)</name>
    <dbReference type="NCBI Taxonomy" id="380394"/>
    <lineage>
        <taxon>Bacteria</taxon>
        <taxon>Pseudomonadati</taxon>
        <taxon>Pseudomonadota</taxon>
        <taxon>Acidithiobacillia</taxon>
        <taxon>Acidithiobacillales</taxon>
        <taxon>Acidithiobacillaceae</taxon>
        <taxon>Acidithiobacillus</taxon>
    </lineage>
</organism>
<protein>
    <recommendedName>
        <fullName evidence="1">Large ribosomal subunit protein bL20</fullName>
    </recommendedName>
    <alternativeName>
        <fullName evidence="2">50S ribosomal protein L20</fullName>
    </alternativeName>
</protein>
<sequence length="119" mass="13655">MSRVKRGVTAHARHKKVLARAKGFRGQRKSNYRIAHQAVMKALTYEYRDRRTKKRDFRSLWIVRINAAARSEGVTYSRFMNGLLRAGIQLDRKVLADIAVRDKAAFSRLVEVVKGQLAA</sequence>
<gene>
    <name evidence="1" type="primary">rplT</name>
    <name type="ordered locus">Lferr_2240</name>
</gene>